<accession>P66475</accession>
<accession>Q48WV4</accession>
<accession>Q99Y81</accession>
<gene>
    <name evidence="1" type="primary">rpsR</name>
    <name type="ordered locus">SPy_1829</name>
    <name type="ordered locus">M5005_Spy1553</name>
</gene>
<reference key="1">
    <citation type="journal article" date="2001" name="Proc. Natl. Acad. Sci. U.S.A.">
        <title>Complete genome sequence of an M1 strain of Streptococcus pyogenes.</title>
        <authorList>
            <person name="Ferretti J.J."/>
            <person name="McShan W.M."/>
            <person name="Ajdic D.J."/>
            <person name="Savic D.J."/>
            <person name="Savic G."/>
            <person name="Lyon K."/>
            <person name="Primeaux C."/>
            <person name="Sezate S."/>
            <person name="Suvorov A.N."/>
            <person name="Kenton S."/>
            <person name="Lai H.S."/>
            <person name="Lin S.P."/>
            <person name="Qian Y."/>
            <person name="Jia H.G."/>
            <person name="Najar F.Z."/>
            <person name="Ren Q."/>
            <person name="Zhu H."/>
            <person name="Song L."/>
            <person name="White J."/>
            <person name="Yuan X."/>
            <person name="Clifton S.W."/>
            <person name="Roe B.A."/>
            <person name="McLaughlin R.E."/>
        </authorList>
    </citation>
    <scope>NUCLEOTIDE SEQUENCE [LARGE SCALE GENOMIC DNA]</scope>
    <source>
        <strain>ATCC 700294 / SF370 / Serotype M1</strain>
    </source>
</reference>
<reference key="2">
    <citation type="journal article" date="2005" name="J. Infect. Dis.">
        <title>Evolutionary origin and emergence of a highly successful clone of serotype M1 group A Streptococcus involved multiple horizontal gene transfer events.</title>
        <authorList>
            <person name="Sumby P."/>
            <person name="Porcella S.F."/>
            <person name="Madrigal A.G."/>
            <person name="Barbian K.D."/>
            <person name="Virtaneva K."/>
            <person name="Ricklefs S.M."/>
            <person name="Sturdevant D.E."/>
            <person name="Graham M.R."/>
            <person name="Vuopio-Varkila J."/>
            <person name="Hoe N.P."/>
            <person name="Musser J.M."/>
        </authorList>
    </citation>
    <scope>NUCLEOTIDE SEQUENCE [LARGE SCALE GENOMIC DNA]</scope>
    <source>
        <strain>ATCC BAA-947 / MGAS5005 / Serotype M1</strain>
    </source>
</reference>
<protein>
    <recommendedName>
        <fullName evidence="1">Small ribosomal subunit protein bS18</fullName>
    </recommendedName>
    <alternativeName>
        <fullName evidence="2">30S ribosomal protein S18</fullName>
    </alternativeName>
</protein>
<feature type="chain" id="PRO_0000111241" description="Small ribosomal subunit protein bS18">
    <location>
        <begin position="1"/>
        <end position="79"/>
    </location>
</feature>
<comment type="function">
    <text evidence="1">Binds as a heterodimer with protein bS6 to the central domain of the 16S rRNA, where it helps stabilize the platform of the 30S subunit.</text>
</comment>
<comment type="subunit">
    <text evidence="1">Part of the 30S ribosomal subunit. Forms a tight heterodimer with protein bS6.</text>
</comment>
<comment type="similarity">
    <text evidence="1">Belongs to the bacterial ribosomal protein bS18 family.</text>
</comment>
<organism>
    <name type="scientific">Streptococcus pyogenes serotype M1</name>
    <dbReference type="NCBI Taxonomy" id="301447"/>
    <lineage>
        <taxon>Bacteria</taxon>
        <taxon>Bacillati</taxon>
        <taxon>Bacillota</taxon>
        <taxon>Bacilli</taxon>
        <taxon>Lactobacillales</taxon>
        <taxon>Streptococcaceae</taxon>
        <taxon>Streptococcus</taxon>
    </lineage>
</organism>
<sequence>MAQQRRGGFKRRKKVDFIAANKIEYVDYKDTELLSRFVSERGKILPRRVTGTSAKNQRKVTTAIKRARVMALMPYVNED</sequence>
<evidence type="ECO:0000255" key="1">
    <source>
        <dbReference type="HAMAP-Rule" id="MF_00270"/>
    </source>
</evidence>
<evidence type="ECO:0000305" key="2"/>
<keyword id="KW-1185">Reference proteome</keyword>
<keyword id="KW-0687">Ribonucleoprotein</keyword>
<keyword id="KW-0689">Ribosomal protein</keyword>
<keyword id="KW-0694">RNA-binding</keyword>
<keyword id="KW-0699">rRNA-binding</keyword>
<dbReference type="EMBL" id="AE004092">
    <property type="protein sequence ID" value="AAK34551.1"/>
    <property type="molecule type" value="Genomic_DNA"/>
</dbReference>
<dbReference type="EMBL" id="CP000017">
    <property type="protein sequence ID" value="AAZ52171.1"/>
    <property type="molecule type" value="Genomic_DNA"/>
</dbReference>
<dbReference type="RefSeq" id="NP_269830.1">
    <property type="nucleotide sequence ID" value="NC_002737.2"/>
</dbReference>
<dbReference type="SMR" id="P66475"/>
<dbReference type="PaxDb" id="1314-HKU360_01675"/>
<dbReference type="KEGG" id="spy:SPy_1829"/>
<dbReference type="KEGG" id="spz:M5005_Spy1553"/>
<dbReference type="PATRIC" id="fig|160490.10.peg.1588"/>
<dbReference type="HOGENOM" id="CLU_148710_2_2_9"/>
<dbReference type="OMA" id="QKKYCRF"/>
<dbReference type="PRO" id="PR:P66475"/>
<dbReference type="Proteomes" id="UP000000750">
    <property type="component" value="Chromosome"/>
</dbReference>
<dbReference type="GO" id="GO:0022627">
    <property type="term" value="C:cytosolic small ribosomal subunit"/>
    <property type="evidence" value="ECO:0007669"/>
    <property type="project" value="TreeGrafter"/>
</dbReference>
<dbReference type="GO" id="GO:0070181">
    <property type="term" value="F:small ribosomal subunit rRNA binding"/>
    <property type="evidence" value="ECO:0007669"/>
    <property type="project" value="TreeGrafter"/>
</dbReference>
<dbReference type="GO" id="GO:0003735">
    <property type="term" value="F:structural constituent of ribosome"/>
    <property type="evidence" value="ECO:0007669"/>
    <property type="project" value="InterPro"/>
</dbReference>
<dbReference type="GO" id="GO:0006412">
    <property type="term" value="P:translation"/>
    <property type="evidence" value="ECO:0007669"/>
    <property type="project" value="UniProtKB-UniRule"/>
</dbReference>
<dbReference type="FunFam" id="4.10.640.10:FF:000003">
    <property type="entry name" value="30S ribosomal protein S18"/>
    <property type="match status" value="1"/>
</dbReference>
<dbReference type="Gene3D" id="4.10.640.10">
    <property type="entry name" value="Ribosomal protein S18"/>
    <property type="match status" value="1"/>
</dbReference>
<dbReference type="HAMAP" id="MF_00270">
    <property type="entry name" value="Ribosomal_bS18"/>
    <property type="match status" value="1"/>
</dbReference>
<dbReference type="InterPro" id="IPR001648">
    <property type="entry name" value="Ribosomal_bS18"/>
</dbReference>
<dbReference type="InterPro" id="IPR018275">
    <property type="entry name" value="Ribosomal_bS18_CS"/>
</dbReference>
<dbReference type="InterPro" id="IPR036870">
    <property type="entry name" value="Ribosomal_bS18_sf"/>
</dbReference>
<dbReference type="NCBIfam" id="TIGR00165">
    <property type="entry name" value="S18"/>
    <property type="match status" value="1"/>
</dbReference>
<dbReference type="PANTHER" id="PTHR13479">
    <property type="entry name" value="30S RIBOSOMAL PROTEIN S18"/>
    <property type="match status" value="1"/>
</dbReference>
<dbReference type="PANTHER" id="PTHR13479:SF40">
    <property type="entry name" value="SMALL RIBOSOMAL SUBUNIT PROTEIN BS18M"/>
    <property type="match status" value="1"/>
</dbReference>
<dbReference type="Pfam" id="PF01084">
    <property type="entry name" value="Ribosomal_S18"/>
    <property type="match status" value="1"/>
</dbReference>
<dbReference type="PRINTS" id="PR00974">
    <property type="entry name" value="RIBOSOMALS18"/>
</dbReference>
<dbReference type="SUPFAM" id="SSF46911">
    <property type="entry name" value="Ribosomal protein S18"/>
    <property type="match status" value="1"/>
</dbReference>
<dbReference type="PROSITE" id="PS00057">
    <property type="entry name" value="RIBOSOMAL_S18"/>
    <property type="match status" value="1"/>
</dbReference>
<proteinExistence type="inferred from homology"/>
<name>RS18_STRP1</name>